<organism>
    <name type="scientific">Bacillus cereus (strain ATCC 10987 / NRS 248)</name>
    <dbReference type="NCBI Taxonomy" id="222523"/>
    <lineage>
        <taxon>Bacteria</taxon>
        <taxon>Bacillati</taxon>
        <taxon>Bacillota</taxon>
        <taxon>Bacilli</taxon>
        <taxon>Bacillales</taxon>
        <taxon>Bacillaceae</taxon>
        <taxon>Bacillus</taxon>
        <taxon>Bacillus cereus group</taxon>
    </lineage>
</organism>
<feature type="chain" id="PRO_0000249971" description="Anhydro-N-acetylmuramic acid kinase">
    <location>
        <begin position="1"/>
        <end position="383"/>
    </location>
</feature>
<feature type="binding site" evidence="1">
    <location>
        <begin position="9"/>
        <end position="16"/>
    </location>
    <ligand>
        <name>ATP</name>
        <dbReference type="ChEBI" id="CHEBI:30616"/>
    </ligand>
</feature>
<proteinExistence type="inferred from homology"/>
<dbReference type="EC" id="2.7.1.170" evidence="1"/>
<dbReference type="EMBL" id="AE017194">
    <property type="protein sequence ID" value="AAS41415.1"/>
    <property type="molecule type" value="Genomic_DNA"/>
</dbReference>
<dbReference type="SMR" id="Q737Z7"/>
<dbReference type="KEGG" id="bca:BCE_2498"/>
<dbReference type="HOGENOM" id="CLU_038782_1_0_9"/>
<dbReference type="UniPathway" id="UPA00343"/>
<dbReference type="UniPathway" id="UPA00544"/>
<dbReference type="Proteomes" id="UP000002527">
    <property type="component" value="Chromosome"/>
</dbReference>
<dbReference type="GO" id="GO:0005524">
    <property type="term" value="F:ATP binding"/>
    <property type="evidence" value="ECO:0007669"/>
    <property type="project" value="UniProtKB-UniRule"/>
</dbReference>
<dbReference type="GO" id="GO:0016301">
    <property type="term" value="F:kinase activity"/>
    <property type="evidence" value="ECO:0007669"/>
    <property type="project" value="UniProtKB-KW"/>
</dbReference>
<dbReference type="GO" id="GO:0016773">
    <property type="term" value="F:phosphotransferase activity, alcohol group as acceptor"/>
    <property type="evidence" value="ECO:0007669"/>
    <property type="project" value="UniProtKB-UniRule"/>
</dbReference>
<dbReference type="GO" id="GO:0097175">
    <property type="term" value="P:1,6-anhydro-N-acetyl-beta-muramic acid catabolic process"/>
    <property type="evidence" value="ECO:0007669"/>
    <property type="project" value="UniProtKB-UniRule"/>
</dbReference>
<dbReference type="GO" id="GO:0006040">
    <property type="term" value="P:amino sugar metabolic process"/>
    <property type="evidence" value="ECO:0007669"/>
    <property type="project" value="InterPro"/>
</dbReference>
<dbReference type="GO" id="GO:0009254">
    <property type="term" value="P:peptidoglycan turnover"/>
    <property type="evidence" value="ECO:0007669"/>
    <property type="project" value="UniProtKB-UniRule"/>
</dbReference>
<dbReference type="CDD" id="cd24050">
    <property type="entry name" value="ASKHA_NBD_ANMK"/>
    <property type="match status" value="1"/>
</dbReference>
<dbReference type="Gene3D" id="3.30.420.40">
    <property type="match status" value="2"/>
</dbReference>
<dbReference type="HAMAP" id="MF_01270">
    <property type="entry name" value="AnhMurNAc_kinase"/>
    <property type="match status" value="1"/>
</dbReference>
<dbReference type="InterPro" id="IPR005338">
    <property type="entry name" value="Anhydro_N_Ac-Mur_kinase"/>
</dbReference>
<dbReference type="InterPro" id="IPR043129">
    <property type="entry name" value="ATPase_NBD"/>
</dbReference>
<dbReference type="NCBIfam" id="NF007142">
    <property type="entry name" value="PRK09585.2-1"/>
    <property type="match status" value="1"/>
</dbReference>
<dbReference type="NCBIfam" id="NF007148">
    <property type="entry name" value="PRK09585.3-2"/>
    <property type="match status" value="1"/>
</dbReference>
<dbReference type="PANTHER" id="PTHR30605">
    <property type="entry name" value="ANHYDRO-N-ACETYLMURAMIC ACID KINASE"/>
    <property type="match status" value="1"/>
</dbReference>
<dbReference type="PANTHER" id="PTHR30605:SF0">
    <property type="entry name" value="ANHYDRO-N-ACETYLMURAMIC ACID KINASE"/>
    <property type="match status" value="1"/>
</dbReference>
<dbReference type="Pfam" id="PF03702">
    <property type="entry name" value="AnmK"/>
    <property type="match status" value="1"/>
</dbReference>
<dbReference type="SUPFAM" id="SSF53067">
    <property type="entry name" value="Actin-like ATPase domain"/>
    <property type="match status" value="1"/>
</dbReference>
<sequence>MYVAGVMSGTSLDGIDVALVHIEGSGVGSKVELIHFTTVPFRNDIKNEIQQVLSIKNSNVQLICSLNFKLGLCFAKAVKEVCKEANFSLEQLDLIGSHGQTIYHQPKPEGNMISSTLQIGEPAVIAYETNTTVISNFRTMDMAAGGQGAPLVPYSEIILYRHPTKNRLLQNIGGIGNVTVIPSQKSDQNVIAFDTGPGNMIIDEVCQRLFQLPYDQNGEIAEQGEVVDEILTYCMNHSFLKMNPPKSTGREQFGEEFVSQLLKRYEKHSKENILTTVTMFTASSIVHHYKEFILPYYEIDEVILGGGGSYNDTLVEMIRYGLKDEKCTIFIQEDIGYSSEAKEAIAFAILANETYHRNPSNVPSATGAMQSVVLGNITFPPIR</sequence>
<name>ANMK_BACC1</name>
<gene>
    <name evidence="1" type="primary">anmK</name>
    <name type="ordered locus">BCE_2498</name>
</gene>
<accession>Q737Z7</accession>
<reference key="1">
    <citation type="journal article" date="2004" name="Nucleic Acids Res.">
        <title>The genome sequence of Bacillus cereus ATCC 10987 reveals metabolic adaptations and a large plasmid related to Bacillus anthracis pXO1.</title>
        <authorList>
            <person name="Rasko D.A."/>
            <person name="Ravel J."/>
            <person name="Oekstad O.A."/>
            <person name="Helgason E."/>
            <person name="Cer R.Z."/>
            <person name="Jiang L."/>
            <person name="Shores K.A."/>
            <person name="Fouts D.E."/>
            <person name="Tourasse N.J."/>
            <person name="Angiuoli S.V."/>
            <person name="Kolonay J.F."/>
            <person name="Nelson W.C."/>
            <person name="Kolstoe A.-B."/>
            <person name="Fraser C.M."/>
            <person name="Read T.D."/>
        </authorList>
    </citation>
    <scope>NUCLEOTIDE SEQUENCE [LARGE SCALE GENOMIC DNA]</scope>
    <source>
        <strain>ATCC 10987 / NRS 248</strain>
    </source>
</reference>
<evidence type="ECO:0000255" key="1">
    <source>
        <dbReference type="HAMAP-Rule" id="MF_01270"/>
    </source>
</evidence>
<protein>
    <recommendedName>
        <fullName evidence="1">Anhydro-N-acetylmuramic acid kinase</fullName>
        <ecNumber evidence="1">2.7.1.170</ecNumber>
    </recommendedName>
    <alternativeName>
        <fullName evidence="1">AnhMurNAc kinase</fullName>
    </alternativeName>
</protein>
<comment type="function">
    <text evidence="1">Catalyzes the specific phosphorylation of 1,6-anhydro-N-acetylmuramic acid (anhMurNAc) with the simultaneous cleavage of the 1,6-anhydro ring, generating MurNAc-6-P. Is required for the utilization of anhMurNAc either imported from the medium or derived from its own cell wall murein, and thus plays a role in cell wall recycling.</text>
</comment>
<comment type="catalytic activity">
    <reaction evidence="1">
        <text>1,6-anhydro-N-acetyl-beta-muramate + ATP + H2O = N-acetyl-D-muramate 6-phosphate + ADP + H(+)</text>
        <dbReference type="Rhea" id="RHEA:24952"/>
        <dbReference type="ChEBI" id="CHEBI:15377"/>
        <dbReference type="ChEBI" id="CHEBI:15378"/>
        <dbReference type="ChEBI" id="CHEBI:30616"/>
        <dbReference type="ChEBI" id="CHEBI:58690"/>
        <dbReference type="ChEBI" id="CHEBI:58722"/>
        <dbReference type="ChEBI" id="CHEBI:456216"/>
        <dbReference type="EC" id="2.7.1.170"/>
    </reaction>
</comment>
<comment type="pathway">
    <text evidence="1">Amino-sugar metabolism; 1,6-anhydro-N-acetylmuramate degradation.</text>
</comment>
<comment type="pathway">
    <text evidence="1">Cell wall biogenesis; peptidoglycan recycling.</text>
</comment>
<comment type="similarity">
    <text evidence="1">Belongs to the anhydro-N-acetylmuramic acid kinase family.</text>
</comment>
<keyword id="KW-0067">ATP-binding</keyword>
<keyword id="KW-0119">Carbohydrate metabolism</keyword>
<keyword id="KW-0418">Kinase</keyword>
<keyword id="KW-0547">Nucleotide-binding</keyword>
<keyword id="KW-0808">Transferase</keyword>